<reference key="1">
    <citation type="journal article" date="2002" name="J. Bacteriol.">
        <title>Genome sequence and analysis of the oral bacterium Fusobacterium nucleatum strain ATCC 25586.</title>
        <authorList>
            <person name="Kapatral V."/>
            <person name="Anderson I."/>
            <person name="Ivanova N."/>
            <person name="Reznik G."/>
            <person name="Los T."/>
            <person name="Lykidis A."/>
            <person name="Bhattacharyya A."/>
            <person name="Bartman A."/>
            <person name="Gardner W."/>
            <person name="Grechkin G."/>
            <person name="Zhu L."/>
            <person name="Vasieva O."/>
            <person name="Chu L."/>
            <person name="Kogan Y."/>
            <person name="Chaga O."/>
            <person name="Goltsman E."/>
            <person name="Bernal A."/>
            <person name="Larsen N."/>
            <person name="D'Souza M."/>
            <person name="Walunas T."/>
            <person name="Pusch G."/>
            <person name="Haselkorn R."/>
            <person name="Fonstein M."/>
            <person name="Kyrpides N.C."/>
            <person name="Overbeek R."/>
        </authorList>
    </citation>
    <scope>NUCLEOTIDE SEQUENCE [LARGE SCALE GENOMIC DNA]</scope>
    <source>
        <strain>ATCC 25586 / DSM 15643 / BCRC 10681 / CIP 101130 / JCM 8532 / KCTC 2640 / LMG 13131 / VPI 4355</strain>
    </source>
</reference>
<name>SMC_FUSNN</name>
<gene>
    <name evidence="1" type="primary">smc</name>
    <name type="ordered locus">FN1129</name>
</gene>
<accession>Q8REH4</accession>
<evidence type="ECO:0000255" key="1">
    <source>
        <dbReference type="HAMAP-Rule" id="MF_01894"/>
    </source>
</evidence>
<evidence type="ECO:0000305" key="2"/>
<feature type="chain" id="PRO_0000409272" description="Chromosome partition protein Smc">
    <location>
        <begin position="1"/>
        <end position="1183"/>
    </location>
</feature>
<feature type="domain" description="SMC hinge">
    <location>
        <begin position="519"/>
        <end position="632"/>
    </location>
</feature>
<feature type="coiled-coil region" evidence="1">
    <location>
        <begin position="162"/>
        <end position="483"/>
    </location>
</feature>
<feature type="coiled-coil region" evidence="1">
    <location>
        <begin position="666"/>
        <end position="1019"/>
    </location>
</feature>
<feature type="binding site" evidence="1">
    <location>
        <begin position="32"/>
        <end position="39"/>
    </location>
    <ligand>
        <name>ATP</name>
        <dbReference type="ChEBI" id="CHEBI:30616"/>
    </ligand>
</feature>
<keyword id="KW-0067">ATP-binding</keyword>
<keyword id="KW-0175">Coiled coil</keyword>
<keyword id="KW-0963">Cytoplasm</keyword>
<keyword id="KW-0238">DNA-binding</keyword>
<keyword id="KW-0547">Nucleotide-binding</keyword>
<keyword id="KW-1185">Reference proteome</keyword>
<sequence>MYLKAVEINGFKSFGDKVYIDFNRGITSIVGPNGSGKSNILDAVLWVLGEQSYKNIRAKESQDVIFSGGKEKKPATKAEVSLIIDNADRYLDLDNDTVKITRRIHISGENEYLINDTKSRLKEIGTLFLDTGIGKTAYSVIGQGKVERIINSSPKEIKSIIEEAAGIKKLQANRIEAQKNLANIEINLDKVEFILNETRENKNKIEKQAELAQKYIDLRDEKSSLAKGIYITELEQKEKNLSENENIKEKYQTECFELQEKLNKTLERLNTIDLEKEEVKKEKLLIDSRNKELRNIISEKEKEKAVTSERLDNVKKEKLVKEEYILHLDNKIEKKLEEVTESKNKKDEISKNIVEMAAANKEFENKIFNLENIKVEKFDLIENRAKKVRDLELEKQLASNEIENNEKKLKSSQDEVENFKQELEEANKKLLANNKEKDLVHSQLEARKEELTKTEERNEFLVNQLSEISKSINKLSQDIREFEYQEKTSSGKLEALVRMDENNEGFFKGVKEVLNSGISGIDGVLISLINFDEKYEKAVEAAIPGNLQDIIVEDKEVAKKCIAFLTEKKLGRTSFLALDTIKPNRREFKANINGVLGLTADLITADKKYQKVIDFIFGGLLIVENIDIATDILNKNLFSGNIVTLTGELVSSRGRITGGENQKSTINQIFERKKEIKTLEEKVTDLKSKITEGSKKREDLSIKLENYENEVDKIDSLEDSIRKDIDLLKKDFESLSEKSEKLSKDIRSISFNIEDAEKYKTSYQDRINSSFSTIEETEKHIASLKKDIEADENLLKQTISEIDSLNKQFSDTRILFLNNQSTIEQLEKDIHSKEIENVELQEEKEKNSKIVIELSHNIEELETLEEELQSQIEEHTKIYNSENRDIETLNEREQNLSNEERELSKDKSKLETDSLHANDRFEKIVEVIEKIKVDILNINEKLNELVEITAQVIEVEKLKSSKDRLRSLENKINNFGDVNLLAINEFKELKERYDYLARERDDVVKSRKQVMDLIQEIDERIHEDFHTTYQNINENFNKMCDETIRNTEGRLNIINPEDFENCGIEIFVKFKNKKKQPLSLLSGGEKSMVAIAFIMAIFMYKPSPFTFLDEIEAALDEKNTKNLLGKLRDFTDKSQFILITHNKETMKESDSIFGVTMNKEIGISKIVSPDKITKILSENKENN</sequence>
<proteinExistence type="inferred from homology"/>
<dbReference type="EMBL" id="AE009951">
    <property type="protein sequence ID" value="AAL95325.1"/>
    <property type="status" value="ALT_INIT"/>
    <property type="molecule type" value="Genomic_DNA"/>
</dbReference>
<dbReference type="RefSeq" id="NP_604026.1">
    <property type="nucleotide sequence ID" value="NC_003454.1"/>
</dbReference>
<dbReference type="RefSeq" id="WP_147373219.1">
    <property type="nucleotide sequence ID" value="NZ_CP028101.1"/>
</dbReference>
<dbReference type="SMR" id="Q8REH4"/>
<dbReference type="FunCoup" id="Q8REH4">
    <property type="interactions" value="336"/>
</dbReference>
<dbReference type="STRING" id="190304.FN1129"/>
<dbReference type="PaxDb" id="190304-FN1129"/>
<dbReference type="EnsemblBacteria" id="AAL95325">
    <property type="protein sequence ID" value="AAL95325"/>
    <property type="gene ID" value="FN1129"/>
</dbReference>
<dbReference type="GeneID" id="79784109"/>
<dbReference type="KEGG" id="fnu:FN1129"/>
<dbReference type="PATRIC" id="fig|190304.8.peg.1694"/>
<dbReference type="eggNOG" id="COG1196">
    <property type="taxonomic scope" value="Bacteria"/>
</dbReference>
<dbReference type="HOGENOM" id="CLU_001042_2_2_0"/>
<dbReference type="InParanoid" id="Q8REH4"/>
<dbReference type="Proteomes" id="UP000002521">
    <property type="component" value="Chromosome"/>
</dbReference>
<dbReference type="GO" id="GO:0005694">
    <property type="term" value="C:chromosome"/>
    <property type="evidence" value="ECO:0007669"/>
    <property type="project" value="InterPro"/>
</dbReference>
<dbReference type="GO" id="GO:0005737">
    <property type="term" value="C:cytoplasm"/>
    <property type="evidence" value="ECO:0000318"/>
    <property type="project" value="GO_Central"/>
</dbReference>
<dbReference type="GO" id="GO:0005524">
    <property type="term" value="F:ATP binding"/>
    <property type="evidence" value="ECO:0007669"/>
    <property type="project" value="UniProtKB-UniRule"/>
</dbReference>
<dbReference type="GO" id="GO:0016887">
    <property type="term" value="F:ATP hydrolysis activity"/>
    <property type="evidence" value="ECO:0007669"/>
    <property type="project" value="InterPro"/>
</dbReference>
<dbReference type="GO" id="GO:0003677">
    <property type="term" value="F:DNA binding"/>
    <property type="evidence" value="ECO:0007669"/>
    <property type="project" value="UniProtKB-UniRule"/>
</dbReference>
<dbReference type="GO" id="GO:0030261">
    <property type="term" value="P:chromosome condensation"/>
    <property type="evidence" value="ECO:0007669"/>
    <property type="project" value="InterPro"/>
</dbReference>
<dbReference type="GO" id="GO:0007059">
    <property type="term" value="P:chromosome segregation"/>
    <property type="evidence" value="ECO:0007669"/>
    <property type="project" value="UniProtKB-UniRule"/>
</dbReference>
<dbReference type="GO" id="GO:0006260">
    <property type="term" value="P:DNA replication"/>
    <property type="evidence" value="ECO:0007669"/>
    <property type="project" value="UniProtKB-UniRule"/>
</dbReference>
<dbReference type="GO" id="GO:0007062">
    <property type="term" value="P:sister chromatid cohesion"/>
    <property type="evidence" value="ECO:0007669"/>
    <property type="project" value="InterPro"/>
</dbReference>
<dbReference type="Gene3D" id="1.20.1060.20">
    <property type="match status" value="1"/>
</dbReference>
<dbReference type="Gene3D" id="3.30.70.1620">
    <property type="match status" value="1"/>
</dbReference>
<dbReference type="Gene3D" id="3.40.50.300">
    <property type="entry name" value="P-loop containing nucleotide triphosphate hydrolases"/>
    <property type="match status" value="2"/>
</dbReference>
<dbReference type="HAMAP" id="MF_01894">
    <property type="entry name" value="Smc_prok"/>
    <property type="match status" value="1"/>
</dbReference>
<dbReference type="InterPro" id="IPR050308">
    <property type="entry name" value="MukB/SMC"/>
</dbReference>
<dbReference type="InterPro" id="IPR027417">
    <property type="entry name" value="P-loop_NTPase"/>
</dbReference>
<dbReference type="InterPro" id="IPR003395">
    <property type="entry name" value="RecF/RecN/SMC_N"/>
</dbReference>
<dbReference type="InterPro" id="IPR024704">
    <property type="entry name" value="SMC"/>
</dbReference>
<dbReference type="InterPro" id="IPR010935">
    <property type="entry name" value="SMC_hinge"/>
</dbReference>
<dbReference type="InterPro" id="IPR036277">
    <property type="entry name" value="SMC_hinge_sf"/>
</dbReference>
<dbReference type="InterPro" id="IPR011890">
    <property type="entry name" value="SMC_prok"/>
</dbReference>
<dbReference type="NCBIfam" id="TIGR02168">
    <property type="entry name" value="SMC_prok_B"/>
    <property type="match status" value="1"/>
</dbReference>
<dbReference type="PANTHER" id="PTHR42963">
    <property type="entry name" value="CHROMOSOME PARTITION PROTEIN MUKB"/>
    <property type="match status" value="1"/>
</dbReference>
<dbReference type="PANTHER" id="PTHR42963:SF1">
    <property type="entry name" value="DUF4476 DOMAIN-CONTAINING PROTEIN"/>
    <property type="match status" value="1"/>
</dbReference>
<dbReference type="Pfam" id="PF06470">
    <property type="entry name" value="SMC_hinge"/>
    <property type="match status" value="1"/>
</dbReference>
<dbReference type="Pfam" id="PF02463">
    <property type="entry name" value="SMC_N"/>
    <property type="match status" value="1"/>
</dbReference>
<dbReference type="PIRSF" id="PIRSF005719">
    <property type="entry name" value="SMC"/>
    <property type="match status" value="1"/>
</dbReference>
<dbReference type="SMART" id="SM00968">
    <property type="entry name" value="SMC_hinge"/>
    <property type="match status" value="1"/>
</dbReference>
<dbReference type="SUPFAM" id="SSF52540">
    <property type="entry name" value="P-loop containing nucleoside triphosphate hydrolases"/>
    <property type="match status" value="1"/>
</dbReference>
<dbReference type="SUPFAM" id="SSF75553">
    <property type="entry name" value="Smc hinge domain"/>
    <property type="match status" value="1"/>
</dbReference>
<protein>
    <recommendedName>
        <fullName evidence="1">Chromosome partition protein Smc</fullName>
    </recommendedName>
</protein>
<organism>
    <name type="scientific">Fusobacterium nucleatum subsp. nucleatum (strain ATCC 25586 / DSM 15643 / BCRC 10681 / CIP 101130 / JCM 8532 / KCTC 2640 / LMG 13131 / VPI 4355)</name>
    <dbReference type="NCBI Taxonomy" id="190304"/>
    <lineage>
        <taxon>Bacteria</taxon>
        <taxon>Fusobacteriati</taxon>
        <taxon>Fusobacteriota</taxon>
        <taxon>Fusobacteriia</taxon>
        <taxon>Fusobacteriales</taxon>
        <taxon>Fusobacteriaceae</taxon>
        <taxon>Fusobacterium</taxon>
    </lineage>
</organism>
<comment type="function">
    <text evidence="1">Required for chromosome condensation and partitioning.</text>
</comment>
<comment type="subunit">
    <text evidence="1">Homodimer.</text>
</comment>
<comment type="subcellular location">
    <subcellularLocation>
        <location evidence="1">Cytoplasm</location>
    </subcellularLocation>
</comment>
<comment type="domain">
    <text evidence="1">Contains large globular domains required for ATP hydrolysis at each terminus and a third globular domain forming a flexible SMC hinge near the middle of the molecule. These domains are separated by coiled-coil structures.</text>
</comment>
<comment type="similarity">
    <text evidence="1">Belongs to the SMC family.</text>
</comment>
<comment type="sequence caution" evidence="2">
    <conflict type="erroneous initiation">
        <sequence resource="EMBL-CDS" id="AAL95325"/>
    </conflict>
    <text>Extended N-terminus.</text>
</comment>